<feature type="chain" id="PRO_0000284078" description="Arylamine N-acetyltransferase 1">
    <location>
        <begin position="1"/>
        <end position="290"/>
    </location>
</feature>
<feature type="binding site" evidence="1">
    <location>
        <position position="103"/>
    </location>
    <ligand>
        <name>CoA</name>
        <dbReference type="ChEBI" id="CHEBI:57287"/>
    </ligand>
</feature>
<feature type="binding site" evidence="1">
    <location>
        <begin position="106"/>
        <end position="107"/>
    </location>
    <ligand>
        <name>substrate</name>
    </ligand>
</feature>
<feature type="binding site" evidence="1">
    <location>
        <position position="208"/>
    </location>
    <ligand>
        <name>CoA</name>
        <dbReference type="ChEBI" id="CHEBI:57287"/>
    </ligand>
</feature>
<feature type="modified residue" description="N-acetylmethionine" evidence="2">
    <location>
        <position position="1"/>
    </location>
</feature>
<dbReference type="EC" id="2.3.1.5"/>
<dbReference type="EMBL" id="BT025447">
    <property type="protein sequence ID" value="ABF57403.1"/>
    <property type="molecule type" value="mRNA"/>
</dbReference>
<dbReference type="EMBL" id="BC123764">
    <property type="protein sequence ID" value="AAI23765.1"/>
    <property type="molecule type" value="mRNA"/>
</dbReference>
<dbReference type="RefSeq" id="NP_001069040.1">
    <property type="nucleotide sequence ID" value="NM_001075572.1"/>
</dbReference>
<dbReference type="RefSeq" id="XP_005226217.1">
    <property type="nucleotide sequence ID" value="XM_005226160.5"/>
</dbReference>
<dbReference type="RefSeq" id="XP_005226218.1">
    <property type="nucleotide sequence ID" value="XM_005226161.5"/>
</dbReference>
<dbReference type="RefSeq" id="XP_005226219.1">
    <property type="nucleotide sequence ID" value="XM_005226162.5"/>
</dbReference>
<dbReference type="RefSeq" id="XP_005226220.1">
    <property type="nucleotide sequence ID" value="XM_005226163.5"/>
</dbReference>
<dbReference type="RefSeq" id="XP_005226221.1">
    <property type="nucleotide sequence ID" value="XM_005226164.5"/>
</dbReference>
<dbReference type="RefSeq" id="XP_010818673.1">
    <property type="nucleotide sequence ID" value="XM_010820371.4"/>
</dbReference>
<dbReference type="RefSeq" id="XP_010818674.1">
    <property type="nucleotide sequence ID" value="XM_010820372.1"/>
</dbReference>
<dbReference type="RefSeq" id="XP_059738187.1">
    <property type="nucleotide sequence ID" value="XM_059882204.1"/>
</dbReference>
<dbReference type="SMR" id="Q1JPA6"/>
<dbReference type="FunCoup" id="Q1JPA6">
    <property type="interactions" value="178"/>
</dbReference>
<dbReference type="STRING" id="9913.ENSBTAP00000045530"/>
<dbReference type="PaxDb" id="9913-ENSBTAP00000045530"/>
<dbReference type="Ensembl" id="ENSBTAT00000048506.5">
    <property type="protein sequence ID" value="ENSBTAP00000045530.3"/>
    <property type="gene ID" value="ENSBTAG00000016473.6"/>
</dbReference>
<dbReference type="Ensembl" id="ENSBTAT00000103477.1">
    <property type="protein sequence ID" value="ENSBTAP00000098202.1"/>
    <property type="gene ID" value="ENSBTAG00000016473.6"/>
</dbReference>
<dbReference type="Ensembl" id="ENSBTAT00000111369.1">
    <property type="protein sequence ID" value="ENSBTAP00000091763.1"/>
    <property type="gene ID" value="ENSBTAG00000016473.6"/>
</dbReference>
<dbReference type="Ensembl" id="ENSBTAT00000123996.1">
    <property type="protein sequence ID" value="ENSBTAP00000080244.1"/>
    <property type="gene ID" value="ENSBTAG00000016473.6"/>
</dbReference>
<dbReference type="Ensembl" id="ENSBTAT00000132251.1">
    <property type="protein sequence ID" value="ENSBTAP00000078617.1"/>
    <property type="gene ID" value="ENSBTAG00000016473.6"/>
</dbReference>
<dbReference type="GeneID" id="512603"/>
<dbReference type="KEGG" id="bta:512603"/>
<dbReference type="CTD" id="9"/>
<dbReference type="VEuPathDB" id="HostDB:ENSBTAG00000016473"/>
<dbReference type="eggNOG" id="ENOG502RD0D">
    <property type="taxonomic scope" value="Eukaryota"/>
</dbReference>
<dbReference type="GeneTree" id="ENSGT00390000012054"/>
<dbReference type="HOGENOM" id="CLU_049918_3_0_1"/>
<dbReference type="InParanoid" id="Q1JPA6"/>
<dbReference type="OMA" id="CYEHNTL"/>
<dbReference type="OrthoDB" id="10260017at2759"/>
<dbReference type="TreeFam" id="TF106311"/>
<dbReference type="Reactome" id="R-BTA-156582">
    <property type="pathway name" value="Acetylation"/>
</dbReference>
<dbReference type="Reactome" id="R-BTA-9753281">
    <property type="pathway name" value="Paracetamol ADME"/>
</dbReference>
<dbReference type="Proteomes" id="UP000009136">
    <property type="component" value="Chromosome 27"/>
</dbReference>
<dbReference type="Bgee" id="ENSBTAG00000016473">
    <property type="expression patterns" value="Expressed in rumen papilla and 104 other cell types or tissues"/>
</dbReference>
<dbReference type="GO" id="GO:0005737">
    <property type="term" value="C:cytoplasm"/>
    <property type="evidence" value="ECO:0007669"/>
    <property type="project" value="UniProtKB-SubCell"/>
</dbReference>
<dbReference type="GO" id="GO:0004060">
    <property type="term" value="F:arylamine N-acetyltransferase activity"/>
    <property type="evidence" value="ECO:0000318"/>
    <property type="project" value="GO_Central"/>
</dbReference>
<dbReference type="FunFam" id="3.30.2140.20:FF:000001">
    <property type="entry name" value="Arylamine N-acetyltransferase 1"/>
    <property type="match status" value="1"/>
</dbReference>
<dbReference type="Gene3D" id="3.30.2140.20">
    <property type="match status" value="1"/>
</dbReference>
<dbReference type="InterPro" id="IPR001447">
    <property type="entry name" value="Arylamine_N-AcTrfase"/>
</dbReference>
<dbReference type="InterPro" id="IPR053710">
    <property type="entry name" value="Arylamine_NAT_domain_sf"/>
</dbReference>
<dbReference type="InterPro" id="IPR038765">
    <property type="entry name" value="Papain-like_cys_pep_sf"/>
</dbReference>
<dbReference type="PANTHER" id="PTHR11786:SF8">
    <property type="entry name" value="ARYLAMINE N-ACETYLTRANSFERASE 1"/>
    <property type="match status" value="1"/>
</dbReference>
<dbReference type="PANTHER" id="PTHR11786">
    <property type="entry name" value="N-HYDROXYARYLAMINE O-ACETYLTRANSFERASE"/>
    <property type="match status" value="1"/>
</dbReference>
<dbReference type="Pfam" id="PF00797">
    <property type="entry name" value="Acetyltransf_2"/>
    <property type="match status" value="1"/>
</dbReference>
<dbReference type="PRINTS" id="PR01543">
    <property type="entry name" value="ANATRNSFRASE"/>
</dbReference>
<dbReference type="SUPFAM" id="SSF54001">
    <property type="entry name" value="Cysteine proteinases"/>
    <property type="match status" value="1"/>
</dbReference>
<name>ARY1_BOVIN</name>
<keyword id="KW-0007">Acetylation</keyword>
<keyword id="KW-0012">Acyltransferase</keyword>
<keyword id="KW-0963">Cytoplasm</keyword>
<keyword id="KW-1185">Reference proteome</keyword>
<keyword id="KW-0808">Transferase</keyword>
<organism>
    <name type="scientific">Bos taurus</name>
    <name type="common">Bovine</name>
    <dbReference type="NCBI Taxonomy" id="9913"/>
    <lineage>
        <taxon>Eukaryota</taxon>
        <taxon>Metazoa</taxon>
        <taxon>Chordata</taxon>
        <taxon>Craniata</taxon>
        <taxon>Vertebrata</taxon>
        <taxon>Euteleostomi</taxon>
        <taxon>Mammalia</taxon>
        <taxon>Eutheria</taxon>
        <taxon>Laurasiatheria</taxon>
        <taxon>Artiodactyla</taxon>
        <taxon>Ruminantia</taxon>
        <taxon>Pecora</taxon>
        <taxon>Bovidae</taxon>
        <taxon>Bovinae</taxon>
        <taxon>Bos</taxon>
    </lineage>
</organism>
<evidence type="ECO:0000250" key="1"/>
<evidence type="ECO:0000250" key="2">
    <source>
        <dbReference type="UniProtKB" id="P18440"/>
    </source>
</evidence>
<evidence type="ECO:0000305" key="3"/>
<sequence>MDIDAYFERIGYKNSRDKLDLETLTDILQHQIRAIPFENLNIHCGEAMELDLEVIFDQIVRRKRGGWCLQVNHLLYWALTMIGFETTILGGYVYNTFNDKYSSAMIHLLLKVTIDGRDYIADAGFGRSYQMWQPLELISGKYQPQTPCIFRLTEDRGTWYLDQIRREQYIPNQDFLDSDLLEKNEYRKIYSFTLEPRTIKDFESVNTYLQESPASVFTSKSFCSLQTPEGVHCLVGFTLTYRRFNYKDNTDLVEFKTLNEKEIEENLKNIFNISLEKKLTPKHGDKFFTI</sequence>
<protein>
    <recommendedName>
        <fullName>Arylamine N-acetyltransferase 1</fullName>
        <ecNumber>2.3.1.5</ecNumber>
    </recommendedName>
    <alternativeName>
        <fullName>Arylamide acetylase 1</fullName>
    </alternativeName>
    <alternativeName>
        <fullName>N-acetyltransferase type 1</fullName>
        <shortName>NAT-1</shortName>
    </alternativeName>
</protein>
<proteinExistence type="evidence at transcript level"/>
<accession>Q1JPA6</accession>
<reference key="1">
    <citation type="journal article" date="2005" name="BMC Genomics">
        <title>Characterization of 954 bovine full-CDS cDNA sequences.</title>
        <authorList>
            <person name="Harhay G.P."/>
            <person name="Sonstegard T.S."/>
            <person name="Keele J.W."/>
            <person name="Heaton M.P."/>
            <person name="Clawson M.L."/>
            <person name="Snelling W.M."/>
            <person name="Wiedmann R.T."/>
            <person name="Van Tassell C.P."/>
            <person name="Smith T.P.L."/>
        </authorList>
    </citation>
    <scope>NUCLEOTIDE SEQUENCE [LARGE SCALE MRNA]</scope>
</reference>
<reference key="2">
    <citation type="submission" date="2006-09" db="EMBL/GenBank/DDBJ databases">
        <authorList>
            <consortium name="NIH - Mammalian Gene Collection (MGC) project"/>
        </authorList>
    </citation>
    <scope>NUCLEOTIDE SEQUENCE [LARGE SCALE MRNA]</scope>
    <source>
        <strain>Hereford</strain>
        <tissue>Fetal muscle</tissue>
    </source>
</reference>
<comment type="function">
    <text evidence="1">Participates in the detoxification of a plethora of hydrazine and arylamine drugs.</text>
</comment>
<comment type="catalytic activity">
    <reaction>
        <text>an arylamine + acetyl-CoA = an N-acetylarylamine + CoA</text>
        <dbReference type="Rhea" id="RHEA:16613"/>
        <dbReference type="ChEBI" id="CHEBI:13790"/>
        <dbReference type="ChEBI" id="CHEBI:50471"/>
        <dbReference type="ChEBI" id="CHEBI:57287"/>
        <dbReference type="ChEBI" id="CHEBI:57288"/>
        <dbReference type="EC" id="2.3.1.5"/>
    </reaction>
</comment>
<comment type="subcellular location">
    <subcellularLocation>
        <location evidence="1">Cytoplasm</location>
    </subcellularLocation>
</comment>
<comment type="similarity">
    <text evidence="3">Belongs to the arylamine N-acetyltransferase family.</text>
</comment>
<gene>
    <name type="primary">NAT1</name>
</gene>